<sequence>MDAIKKKMQAMKIEKDNAMDRADAAEEKARQQQERVEKLEEELRDTQKKMMQVENELDKAQEELTGANAQLEEKEKKVQEAEAEVAALNRRIQLLEEDFERAEERLKIATEKLEEASQTADESERVRKVMENRSLQDEERVYQLEAQLKEAQLLAEEADRKYDEVARKLAMVEADLERAEERAEAGENKIVELEEELRVVGNNLKSLEVSEEKALQREDSYEEQIRLLTQRLKEAETRAEFAERSVQKLQKEVDRLEDELVHEKEKYKAISEELDQTFQELSGY</sequence>
<name>TPM_TRIPS</name>
<protein>
    <recommendedName>
        <fullName>Tropomyosin</fullName>
    </recommendedName>
</protein>
<dbReference type="EMBL" id="AF453521">
    <property type="protein sequence ID" value="AAL41024.1"/>
    <property type="molecule type" value="mRNA"/>
</dbReference>
<dbReference type="SMR" id="Q8WR63"/>
<dbReference type="OrthoDB" id="128924at2759"/>
<dbReference type="FunFam" id="1.20.5.170:FF:000005">
    <property type="entry name" value="Tropomyosin alpha-1 chain"/>
    <property type="match status" value="1"/>
</dbReference>
<dbReference type="FunFam" id="1.20.5.170:FF:000001">
    <property type="entry name" value="Tropomyosin alpha-1 chain isoform 1"/>
    <property type="match status" value="1"/>
</dbReference>
<dbReference type="FunFam" id="1.20.5.340:FF:000001">
    <property type="entry name" value="Tropomyosin alpha-1 chain isoform 2"/>
    <property type="match status" value="1"/>
</dbReference>
<dbReference type="Gene3D" id="1.20.5.170">
    <property type="match status" value="2"/>
</dbReference>
<dbReference type="Gene3D" id="1.20.5.340">
    <property type="match status" value="1"/>
</dbReference>
<dbReference type="InterPro" id="IPR000533">
    <property type="entry name" value="Tropomyosin"/>
</dbReference>
<dbReference type="PANTHER" id="PTHR19269">
    <property type="entry name" value="TROPOMYOSIN"/>
    <property type="match status" value="1"/>
</dbReference>
<dbReference type="Pfam" id="PF00261">
    <property type="entry name" value="Tropomyosin"/>
    <property type="match status" value="1"/>
</dbReference>
<dbReference type="PRINTS" id="PR00194">
    <property type="entry name" value="TROPOMYOSIN"/>
</dbReference>
<dbReference type="SUPFAM" id="SSF57997">
    <property type="entry name" value="Tropomyosin"/>
    <property type="match status" value="1"/>
</dbReference>
<dbReference type="PROSITE" id="PS00326">
    <property type="entry name" value="TROPOMYOSIN"/>
    <property type="match status" value="1"/>
</dbReference>
<reference key="1">
    <citation type="submission" date="2001-11" db="EMBL/GenBank/DDBJ databases">
        <title>Molecular cloning and expression of the full length tropomyosin gene from Trichinella pseudospiralis.</title>
        <authorList>
            <person name="Nakada T."/>
            <person name="Nagano I."/>
            <person name="Takahashi Y."/>
        </authorList>
    </citation>
    <scope>NUCLEOTIDE SEQUENCE [MRNA]</scope>
</reference>
<keyword id="KW-0175">Coiled coil</keyword>
<keyword id="KW-0677">Repeat</keyword>
<feature type="chain" id="PRO_0000205649" description="Tropomyosin">
    <location>
        <begin position="1"/>
        <end position="284"/>
    </location>
</feature>
<feature type="region of interest" description="Disordered" evidence="2">
    <location>
        <begin position="1"/>
        <end position="47"/>
    </location>
</feature>
<feature type="coiled-coil region">
    <location>
        <begin position="1"/>
        <end position="284"/>
    </location>
</feature>
<feature type="compositionally biased region" description="Basic and acidic residues" evidence="2">
    <location>
        <begin position="12"/>
        <end position="38"/>
    </location>
</feature>
<evidence type="ECO:0000250" key="1"/>
<evidence type="ECO:0000256" key="2">
    <source>
        <dbReference type="SAM" id="MobiDB-lite"/>
    </source>
</evidence>
<evidence type="ECO:0000305" key="3"/>
<accession>Q8WR63</accession>
<organism>
    <name type="scientific">Trichinella pseudospiralis</name>
    <name type="common">Parasitic roundworm</name>
    <dbReference type="NCBI Taxonomy" id="6337"/>
    <lineage>
        <taxon>Eukaryota</taxon>
        <taxon>Metazoa</taxon>
        <taxon>Ecdysozoa</taxon>
        <taxon>Nematoda</taxon>
        <taxon>Enoplea</taxon>
        <taxon>Dorylaimia</taxon>
        <taxon>Trichinellida</taxon>
        <taxon>Trichinellidae</taxon>
        <taxon>Trichinella</taxon>
    </lineage>
</organism>
<comment type="function">
    <text evidence="1">Tropomyosin, in association with the troponin complex, plays a central role in the calcium dependent regulation of muscle contraction.</text>
</comment>
<comment type="subunit">
    <text evidence="1">Homodimer.</text>
</comment>
<comment type="domain">
    <text>The molecule is in a coiled coil structure that is formed by 2 polypeptide chains. The sequence exhibits a prominent seven-residues periodicity.</text>
</comment>
<comment type="similarity">
    <text evidence="3">Belongs to the tropomyosin family.</text>
</comment>
<proteinExistence type="evidence at transcript level"/>